<dbReference type="EMBL" id="X04141">
    <property type="protein sequence ID" value="CAA27761.1"/>
    <property type="molecule type" value="mRNA"/>
</dbReference>
<dbReference type="EMBL" id="M11777">
    <property type="protein sequence ID" value="AAA40816.1"/>
    <property type="molecule type" value="mRNA"/>
</dbReference>
<dbReference type="EMBL" id="M23637">
    <property type="protein sequence ID" value="AAA41761.1"/>
    <property type="molecule type" value="Genomic_DNA"/>
</dbReference>
<dbReference type="EMBL" id="M25490">
    <property type="protein sequence ID" value="AAA53280.1"/>
    <property type="molecule type" value="Genomic_DNA"/>
</dbReference>
<dbReference type="EMBL" id="J04500">
    <property type="protein sequence ID" value="AAA41764.1"/>
    <property type="molecule type" value="Genomic_DNA"/>
</dbReference>
<dbReference type="PIR" id="A31856">
    <property type="entry name" value="GERT"/>
</dbReference>
<dbReference type="RefSeq" id="NP_038200.1">
    <property type="nucleotide sequence ID" value="NM_013414.1"/>
</dbReference>
<dbReference type="RefSeq" id="XP_006232656.1">
    <property type="nucleotide sequence ID" value="XM_006232594.3"/>
</dbReference>
<dbReference type="SMR" id="P04640"/>
<dbReference type="FunCoup" id="P04640">
    <property type="interactions" value="3"/>
</dbReference>
<dbReference type="STRING" id="10116.ENSRNOP00000026530"/>
<dbReference type="PaxDb" id="10116-ENSRNOP00000026530"/>
<dbReference type="Ensembl" id="ENSRNOT00000026530.4">
    <property type="protein sequence ID" value="ENSRNOP00000026530.1"/>
    <property type="gene ID" value="ENSRNOG00000019607.4"/>
</dbReference>
<dbReference type="GeneID" id="25295"/>
<dbReference type="KEGG" id="rno:25295"/>
<dbReference type="UCSC" id="RGD:2206">
    <property type="organism name" value="rat"/>
</dbReference>
<dbReference type="AGR" id="RGD:2206"/>
<dbReference type="CTD" id="632"/>
<dbReference type="RGD" id="2206">
    <property type="gene designation" value="Bglap"/>
</dbReference>
<dbReference type="eggNOG" id="ENOG502S85I">
    <property type="taxonomic scope" value="Eukaryota"/>
</dbReference>
<dbReference type="GeneTree" id="ENSGT00410000026290"/>
<dbReference type="HOGENOM" id="CLU_160110_0_0_1"/>
<dbReference type="InParanoid" id="P04640"/>
<dbReference type="OMA" id="MDTEGII"/>
<dbReference type="OrthoDB" id="9950568at2759"/>
<dbReference type="PhylomeDB" id="P04640"/>
<dbReference type="TreeFam" id="TF330920"/>
<dbReference type="Reactome" id="R-RNO-159740">
    <property type="pathway name" value="Gamma-carboxylation of protein precursors"/>
</dbReference>
<dbReference type="Reactome" id="R-RNO-159763">
    <property type="pathway name" value="Transport of gamma-carboxylated protein precursors from the endoplasmic reticulum to the Golgi apparatus"/>
</dbReference>
<dbReference type="Reactome" id="R-RNO-159782">
    <property type="pathway name" value="Removal of aminoterminal propeptides from gamma-carboxylated proteins"/>
</dbReference>
<dbReference type="PRO" id="PR:P04640"/>
<dbReference type="Proteomes" id="UP000002494">
    <property type="component" value="Chromosome 2"/>
</dbReference>
<dbReference type="Bgee" id="ENSRNOG00000019607">
    <property type="expression patterns" value="Expressed in thymus and 11 other cell types or tissues"/>
</dbReference>
<dbReference type="GO" id="GO:0042995">
    <property type="term" value="C:cell projection"/>
    <property type="evidence" value="ECO:0000314"/>
    <property type="project" value="RGD"/>
</dbReference>
<dbReference type="GO" id="GO:0005737">
    <property type="term" value="C:cytoplasm"/>
    <property type="evidence" value="ECO:0000266"/>
    <property type="project" value="RGD"/>
</dbReference>
<dbReference type="GO" id="GO:0030425">
    <property type="term" value="C:dendrite"/>
    <property type="evidence" value="ECO:0000314"/>
    <property type="project" value="RGD"/>
</dbReference>
<dbReference type="GO" id="GO:0005576">
    <property type="term" value="C:extracellular region"/>
    <property type="evidence" value="ECO:0000314"/>
    <property type="project" value="MGI"/>
</dbReference>
<dbReference type="GO" id="GO:0005615">
    <property type="term" value="C:extracellular space"/>
    <property type="evidence" value="ECO:0000314"/>
    <property type="project" value="RGD"/>
</dbReference>
<dbReference type="GO" id="GO:0043204">
    <property type="term" value="C:perikaryon"/>
    <property type="evidence" value="ECO:0000314"/>
    <property type="project" value="RGD"/>
</dbReference>
<dbReference type="GO" id="GO:0031982">
    <property type="term" value="C:vesicle"/>
    <property type="evidence" value="ECO:0000314"/>
    <property type="project" value="RGD"/>
</dbReference>
<dbReference type="GO" id="GO:0005509">
    <property type="term" value="F:calcium ion binding"/>
    <property type="evidence" value="ECO:0000266"/>
    <property type="project" value="RGD"/>
</dbReference>
<dbReference type="GO" id="GO:0048306">
    <property type="term" value="F:calcium-dependent protein binding"/>
    <property type="evidence" value="ECO:0000266"/>
    <property type="project" value="RGD"/>
</dbReference>
<dbReference type="GO" id="GO:0005179">
    <property type="term" value="F:hormone activity"/>
    <property type="evidence" value="ECO:0000250"/>
    <property type="project" value="UniProtKB"/>
</dbReference>
<dbReference type="GO" id="GO:0046848">
    <property type="term" value="F:hydroxyapatite binding"/>
    <property type="evidence" value="ECO:0000318"/>
    <property type="project" value="GO_Central"/>
</dbReference>
<dbReference type="GO" id="GO:0008147">
    <property type="term" value="F:structural constituent of bone"/>
    <property type="evidence" value="ECO:0000314"/>
    <property type="project" value="RGD"/>
</dbReference>
<dbReference type="GO" id="GO:0046914">
    <property type="term" value="F:transition metal ion binding"/>
    <property type="evidence" value="ECO:0000266"/>
    <property type="project" value="RGD"/>
</dbReference>
<dbReference type="GO" id="GO:0031214">
    <property type="term" value="P:biomineral tissue development"/>
    <property type="evidence" value="ECO:0007669"/>
    <property type="project" value="UniProtKB-KW"/>
</dbReference>
<dbReference type="GO" id="GO:0060348">
    <property type="term" value="P:bone development"/>
    <property type="evidence" value="ECO:0000270"/>
    <property type="project" value="RGD"/>
</dbReference>
<dbReference type="GO" id="GO:0007420">
    <property type="term" value="P:brain development"/>
    <property type="evidence" value="ECO:0000250"/>
    <property type="project" value="UniProtKB"/>
</dbReference>
<dbReference type="GO" id="GO:0071773">
    <property type="term" value="P:cellular response to BMP stimulus"/>
    <property type="evidence" value="ECO:0000266"/>
    <property type="project" value="RGD"/>
</dbReference>
<dbReference type="GO" id="GO:0071363">
    <property type="term" value="P:cellular response to growth factor stimulus"/>
    <property type="evidence" value="ECO:0000270"/>
    <property type="project" value="RGD"/>
</dbReference>
<dbReference type="GO" id="GO:0032869">
    <property type="term" value="P:cellular response to insulin stimulus"/>
    <property type="evidence" value="ECO:0000250"/>
    <property type="project" value="UniProtKB"/>
</dbReference>
<dbReference type="GO" id="GO:0071305">
    <property type="term" value="P:cellular response to vitamin D"/>
    <property type="evidence" value="ECO:0000270"/>
    <property type="project" value="RGD"/>
</dbReference>
<dbReference type="GO" id="GO:0034224">
    <property type="term" value="P:cellular response to zinc ion starvation"/>
    <property type="evidence" value="ECO:0000270"/>
    <property type="project" value="RGD"/>
</dbReference>
<dbReference type="GO" id="GO:0050890">
    <property type="term" value="P:cognition"/>
    <property type="evidence" value="ECO:0000250"/>
    <property type="project" value="UniProtKB"/>
</dbReference>
<dbReference type="GO" id="GO:0042593">
    <property type="term" value="P:glucose homeostasis"/>
    <property type="evidence" value="ECO:0000250"/>
    <property type="project" value="UniProtKB"/>
</dbReference>
<dbReference type="GO" id="GO:0007611">
    <property type="term" value="P:learning or memory"/>
    <property type="evidence" value="ECO:0000250"/>
    <property type="project" value="UniProtKB"/>
</dbReference>
<dbReference type="GO" id="GO:1903011">
    <property type="term" value="P:negative regulation of bone development"/>
    <property type="evidence" value="ECO:0000250"/>
    <property type="project" value="UniProtKB"/>
</dbReference>
<dbReference type="GO" id="GO:0001503">
    <property type="term" value="P:ossification"/>
    <property type="evidence" value="ECO:0000270"/>
    <property type="project" value="RGD"/>
</dbReference>
<dbReference type="GO" id="GO:0001649">
    <property type="term" value="P:osteoblast differentiation"/>
    <property type="evidence" value="ECO:0000270"/>
    <property type="project" value="RGD"/>
</dbReference>
<dbReference type="GO" id="GO:0001956">
    <property type="term" value="P:positive regulation of neurotransmitter secretion"/>
    <property type="evidence" value="ECO:0000250"/>
    <property type="project" value="UniProtKB"/>
</dbReference>
<dbReference type="GO" id="GO:0030500">
    <property type="term" value="P:regulation of bone mineralization"/>
    <property type="evidence" value="ECO:0007669"/>
    <property type="project" value="InterPro"/>
</dbReference>
<dbReference type="GO" id="GO:1900076">
    <property type="term" value="P:regulation of cellular response to insulin stimulus"/>
    <property type="evidence" value="ECO:0007669"/>
    <property type="project" value="InterPro"/>
</dbReference>
<dbReference type="GO" id="GO:2000224">
    <property type="term" value="P:regulation of testosterone biosynthetic process"/>
    <property type="evidence" value="ECO:0000250"/>
    <property type="project" value="UniProtKB"/>
</dbReference>
<dbReference type="GO" id="GO:0014823">
    <property type="term" value="P:response to activity"/>
    <property type="evidence" value="ECO:0000270"/>
    <property type="project" value="RGD"/>
</dbReference>
<dbReference type="GO" id="GO:0043627">
    <property type="term" value="P:response to estrogen"/>
    <property type="evidence" value="ECO:0000270"/>
    <property type="project" value="RGD"/>
</dbReference>
<dbReference type="GO" id="GO:0045471">
    <property type="term" value="P:response to ethanol"/>
    <property type="evidence" value="ECO:0000270"/>
    <property type="project" value="RGD"/>
</dbReference>
<dbReference type="GO" id="GO:0051384">
    <property type="term" value="P:response to glucocorticoid"/>
    <property type="evidence" value="ECO:0000270"/>
    <property type="project" value="RGD"/>
</dbReference>
<dbReference type="GO" id="GO:0009629">
    <property type="term" value="P:response to gravity"/>
    <property type="evidence" value="ECO:0000270"/>
    <property type="project" value="RGD"/>
</dbReference>
<dbReference type="GO" id="GO:0033594">
    <property type="term" value="P:response to hydroxyisoflavone"/>
    <property type="evidence" value="ECO:0000270"/>
    <property type="project" value="RGD"/>
</dbReference>
<dbReference type="GO" id="GO:0032868">
    <property type="term" value="P:response to insulin"/>
    <property type="evidence" value="ECO:0000270"/>
    <property type="project" value="RGD"/>
</dbReference>
<dbReference type="GO" id="GO:0036005">
    <property type="term" value="P:response to macrophage colony-stimulating factor"/>
    <property type="evidence" value="ECO:0000270"/>
    <property type="project" value="RGD"/>
</dbReference>
<dbReference type="GO" id="GO:0009612">
    <property type="term" value="P:response to mechanical stimulus"/>
    <property type="evidence" value="ECO:0000270"/>
    <property type="project" value="RGD"/>
</dbReference>
<dbReference type="GO" id="GO:0031667">
    <property type="term" value="P:response to nutrient levels"/>
    <property type="evidence" value="ECO:0000270"/>
    <property type="project" value="RGD"/>
</dbReference>
<dbReference type="GO" id="GO:0033574">
    <property type="term" value="P:response to testosterone"/>
    <property type="evidence" value="ECO:0000270"/>
    <property type="project" value="RGD"/>
</dbReference>
<dbReference type="GO" id="GO:0033280">
    <property type="term" value="P:response to vitamin D"/>
    <property type="evidence" value="ECO:0000266"/>
    <property type="project" value="RGD"/>
</dbReference>
<dbReference type="GO" id="GO:0032571">
    <property type="term" value="P:response to vitamin K"/>
    <property type="evidence" value="ECO:0000270"/>
    <property type="project" value="RGD"/>
</dbReference>
<dbReference type="GO" id="GO:0009410">
    <property type="term" value="P:response to xenobiotic stimulus"/>
    <property type="evidence" value="ECO:0000270"/>
    <property type="project" value="RGD"/>
</dbReference>
<dbReference type="GO" id="GO:0010043">
    <property type="term" value="P:response to zinc ion"/>
    <property type="evidence" value="ECO:0000270"/>
    <property type="project" value="RGD"/>
</dbReference>
<dbReference type="GO" id="GO:0048863">
    <property type="term" value="P:stem cell differentiation"/>
    <property type="evidence" value="ECO:0000270"/>
    <property type="project" value="RGD"/>
</dbReference>
<dbReference type="GO" id="GO:0044342">
    <property type="term" value="P:type B pancreatic cell proliferation"/>
    <property type="evidence" value="ECO:0000250"/>
    <property type="project" value="UniProtKB"/>
</dbReference>
<dbReference type="InterPro" id="IPR035972">
    <property type="entry name" value="GLA-like_dom_SF"/>
</dbReference>
<dbReference type="InterPro" id="IPR000294">
    <property type="entry name" value="GLA_domain"/>
</dbReference>
<dbReference type="InterPro" id="IPR039176">
    <property type="entry name" value="Osteocalcin"/>
</dbReference>
<dbReference type="InterPro" id="IPR002384">
    <property type="entry name" value="Osteocalcin/MGP"/>
</dbReference>
<dbReference type="PANTHER" id="PTHR14235">
    <property type="entry name" value="OSTEOCALCIN"/>
    <property type="match status" value="1"/>
</dbReference>
<dbReference type="PANTHER" id="PTHR14235:SF0">
    <property type="entry name" value="OSTEOCALCIN"/>
    <property type="match status" value="1"/>
</dbReference>
<dbReference type="PRINTS" id="PR00002">
    <property type="entry name" value="GLABONE"/>
</dbReference>
<dbReference type="SMART" id="SM00069">
    <property type="entry name" value="GLA"/>
    <property type="match status" value="1"/>
</dbReference>
<dbReference type="SUPFAM" id="SSF57630">
    <property type="entry name" value="GLA-domain"/>
    <property type="match status" value="1"/>
</dbReference>
<dbReference type="PROSITE" id="PS00011">
    <property type="entry name" value="GLA_1"/>
    <property type="match status" value="1"/>
</dbReference>
<dbReference type="PROSITE" id="PS50998">
    <property type="entry name" value="GLA_2"/>
    <property type="match status" value="1"/>
</dbReference>
<gene>
    <name type="primary">Bglap</name>
    <name type="synonym">Bglap2</name>
</gene>
<proteinExistence type="evidence at protein level"/>
<sequence>MRTLSLLTLLALTAFCLSDLAGAKPSDSESDKAFMSKQEGSKVVNRLRRYLNNGLGAPAPYPDPLEPHREVCELNPNCDELADHIGFQDAYKRIYGTTV</sequence>
<feature type="signal peptide" evidence="7">
    <location>
        <begin position="1"/>
        <end position="23"/>
    </location>
</feature>
<feature type="propeptide" id="PRO_0000011092" evidence="7">
    <location>
        <begin position="24"/>
        <end position="49"/>
    </location>
</feature>
<feature type="chain" id="PRO_0000011093" description="Osteocalcin">
    <location>
        <begin position="50"/>
        <end position="99"/>
    </location>
</feature>
<feature type="domain" description="Gla" evidence="5">
    <location>
        <begin position="50"/>
        <end position="96"/>
    </location>
</feature>
<feature type="binding site" evidence="2">
    <location>
        <position position="66"/>
    </location>
    <ligand>
        <name>Ca(2+)</name>
        <dbReference type="ChEBI" id="CHEBI:29108"/>
        <label>1</label>
    </ligand>
</feature>
<feature type="binding site" evidence="2">
    <location>
        <position position="70"/>
    </location>
    <ligand>
        <name>Ca(2+)</name>
        <dbReference type="ChEBI" id="CHEBI:29108"/>
        <label>2</label>
    </ligand>
</feature>
<feature type="binding site" evidence="2">
    <location>
        <position position="73"/>
    </location>
    <ligand>
        <name>Ca(2+)</name>
        <dbReference type="ChEBI" id="CHEBI:29108"/>
        <label>2</label>
    </ligand>
</feature>
<feature type="binding site" evidence="2">
    <location>
        <position position="73"/>
    </location>
    <ligand>
        <name>Ca(2+)</name>
        <dbReference type="ChEBI" id="CHEBI:29108"/>
        <label>3</label>
    </ligand>
</feature>
<feature type="binding site" evidence="2">
    <location>
        <position position="79"/>
    </location>
    <ligand>
        <name>Ca(2+)</name>
        <dbReference type="ChEBI" id="CHEBI:29108"/>
        <label>3</label>
    </ligand>
</feature>
<feature type="modified residue" description="Hydroxyproline" evidence="6">
    <location>
        <position position="58"/>
    </location>
</feature>
<feature type="modified residue" description="4-carboxyglutamate" evidence="1 5">
    <location>
        <position position="66"/>
    </location>
</feature>
<feature type="modified residue" description="4-carboxyglutamate" evidence="3 5">
    <location>
        <position position="70"/>
    </location>
</feature>
<feature type="modified residue" description="4-carboxyglutamate" evidence="3 5">
    <location>
        <position position="73"/>
    </location>
</feature>
<feature type="disulfide bond" evidence="5">
    <location>
        <begin position="72"/>
        <end position="78"/>
    </location>
</feature>
<evidence type="ECO:0000250" key="1">
    <source>
        <dbReference type="UniProtKB" id="P02818"/>
    </source>
</evidence>
<evidence type="ECO:0000250" key="2">
    <source>
        <dbReference type="UniProtKB" id="P02820"/>
    </source>
</evidence>
<evidence type="ECO:0000250" key="3">
    <source>
        <dbReference type="UniProtKB" id="P83489"/>
    </source>
</evidence>
<evidence type="ECO:0000250" key="4">
    <source>
        <dbReference type="UniProtKB" id="P86546"/>
    </source>
</evidence>
<evidence type="ECO:0000255" key="5">
    <source>
        <dbReference type="PROSITE-ProRule" id="PRU00463"/>
    </source>
</evidence>
<evidence type="ECO:0000269" key="6">
    <source>
    </source>
</evidence>
<evidence type="ECO:0000305" key="7"/>
<comment type="function">
    <text evidence="4">The carboxylated form is one of the main organic components of the bone matrix, which constitutes 1-2% of the total bone protein: it acts as a negative regulator of bone formation and is required to limit bone formation without impairing bone resorption or mineralization. The carboxylated form binds strongly to apatite and calcium.</text>
</comment>
<comment type="function">
    <text evidence="4">The uncarboxylated form acts as a hormone secreted by osteoblasts, which regulates different cellular processes, such as energy metabolism, male fertility and brain development. Regulates of energy metabolism by acting as a hormone favoring pancreatic beta-cell proliferation, insulin secretion and sensitivity and energy expenditure. Uncarboxylated osteocalcin hormone also promotes testosterone production in the testes: acts as a ligand for G protein-coupled receptor GPRC6A at the surface of Leydig cells, initiating a signaling response that promotes the expression of enzymes required for testosterone synthesis in a CREB-dependent manner. Also acts as a regulator of brain development: osteocalcin hormone crosses the blood-brain barrier and acts as a ligand for GPR158 on neurons, initiating a signaling response that prevents neuronal apoptosis in the hippocampus, favors the synthesis of all monoamine neurotransmitters and inhibits that of gamma-aminobutyric acid (GABA). Osteocalcin also crosses the placenta during pregnancy and maternal osteocalcin is required for fetal brain development.</text>
</comment>
<comment type="subcellular location">
    <subcellularLocation>
        <location evidence="4">Secreted</location>
    </subcellularLocation>
</comment>
<comment type="PTM">
    <text evidence="4 5">Gamma-carboxyglutamate residues are formed by vitamin K dependent carboxylation by GGCX. These residues are essential for the binding of calcium (By similarity). Decarboxylation promotes the hormone activity (By similarity).</text>
</comment>
<comment type="similarity">
    <text evidence="7">Belongs to the osteocalcin/matrix Gla protein family.</text>
</comment>
<organism>
    <name type="scientific">Rattus norvegicus</name>
    <name type="common">Rat</name>
    <dbReference type="NCBI Taxonomy" id="10116"/>
    <lineage>
        <taxon>Eukaryota</taxon>
        <taxon>Metazoa</taxon>
        <taxon>Chordata</taxon>
        <taxon>Craniata</taxon>
        <taxon>Vertebrata</taxon>
        <taxon>Euteleostomi</taxon>
        <taxon>Mammalia</taxon>
        <taxon>Eutheria</taxon>
        <taxon>Euarchontoglires</taxon>
        <taxon>Glires</taxon>
        <taxon>Rodentia</taxon>
        <taxon>Myomorpha</taxon>
        <taxon>Muroidea</taxon>
        <taxon>Muridae</taxon>
        <taxon>Murinae</taxon>
        <taxon>Rattus</taxon>
    </lineage>
</organism>
<protein>
    <recommendedName>
        <fullName>Osteocalcin</fullName>
    </recommendedName>
    <alternativeName>
        <fullName>Bone Gla protein</fullName>
        <shortName>BGP</shortName>
    </alternativeName>
    <alternativeName>
        <fullName>Gamma-carboxyglutamic acid-containing protein</fullName>
    </alternativeName>
</protein>
<name>OSTCN_RAT</name>
<keyword id="KW-0091">Biomineralization</keyword>
<keyword id="KW-0106">Calcium</keyword>
<keyword id="KW-0165">Cleavage on pair of basic residues</keyword>
<keyword id="KW-1015">Disulfide bond</keyword>
<keyword id="KW-0301">Gamma-carboxyglutamic acid</keyword>
<keyword id="KW-0372">Hormone</keyword>
<keyword id="KW-0379">Hydroxylation</keyword>
<keyword id="KW-0479">Metal-binding</keyword>
<keyword id="KW-1185">Reference proteome</keyword>
<keyword id="KW-0964">Secreted</keyword>
<keyword id="KW-0732">Signal</keyword>
<accession>P04640</accession>
<reference key="1">
    <citation type="journal article" date="1986" name="EMBO J.">
        <title>Isolation of the human gene for bone gla protein utilizing mouse and rat cDNA clones.</title>
        <authorList>
            <person name="Celeste A.J."/>
            <person name="Buecker J.L."/>
            <person name="Kriz R."/>
            <person name="Wang E.A."/>
            <person name="Wozney J.M."/>
        </authorList>
    </citation>
    <scope>NUCLEOTIDE SEQUENCE [MRNA]</scope>
</reference>
<reference key="2">
    <citation type="journal article" date="1985" name="Proc. Natl. Acad. Sci. U.S.A.">
        <title>The propeptide of rat bone gamma-carboxyglutamic acid protein shares homology with other vitamin K-dependent protein precursors.</title>
        <authorList>
            <person name="Pan L.C."/>
            <person name="Price P.A."/>
        </authorList>
    </citation>
    <scope>NUCLEOTIDE SEQUENCE [MRNA]</scope>
    <scope>HYDROXYLATION AT PRO-58</scope>
</reference>
<reference key="3">
    <citation type="journal article" date="1988" name="Biochemistry">
        <title>Characterization of the rat osteocalcin gene: stimulation of promoter activity by 1,25-dihydroxyvitamin D3.</title>
        <authorList>
            <person name="Yoon K."/>
            <person name="Rutledge S.J.C."/>
            <person name="Buenaga R.F."/>
            <person name="Rodan G.A."/>
        </authorList>
    </citation>
    <scope>NUCLEOTIDE SEQUENCE [GENOMIC DNA]</scope>
</reference>
<reference key="4">
    <citation type="journal article" date="1989" name="DNA">
        <title>Molecular structure of the rat bone Gla protein gene and identification of putative regulatory elements.</title>
        <authorList>
            <person name="Theofan G."/>
            <person name="Haberstroh L.M."/>
            <person name="Price P.A."/>
        </authorList>
    </citation>
    <scope>NUCLEOTIDE SEQUENCE [GENOMIC DNA]</scope>
</reference>
<reference key="5">
    <citation type="journal article" date="1989" name="Proc. Natl. Acad. Sci. U.S.A.">
        <title>Structure of the rat osteocalcin gene and regulation of vitamin D-dependent expression.</title>
        <authorList>
            <person name="Lian J."/>
            <person name="Stewart C."/>
            <person name="Puchacz E."/>
            <person name="Mackowiak S."/>
            <person name="Shalhoub V."/>
            <person name="Collart D."/>
            <person name="Zambetti G."/>
            <person name="Stein G."/>
        </authorList>
    </citation>
    <scope>NUCLEOTIDE SEQUENCE [GENOMIC DNA]</scope>
</reference>